<reference key="1">
    <citation type="journal article" date="2009" name="Proc. Natl. Acad. Sci. U.S.A.">
        <title>Biogeography of the Sulfolobus islandicus pan-genome.</title>
        <authorList>
            <person name="Reno M.L."/>
            <person name="Held N.L."/>
            <person name="Fields C.J."/>
            <person name="Burke P.V."/>
            <person name="Whitaker R.J."/>
        </authorList>
    </citation>
    <scope>NUCLEOTIDE SEQUENCE [LARGE SCALE GENOMIC DNA]</scope>
    <source>
        <strain>L.S.2.15 / Lassen #1</strain>
    </source>
</reference>
<accession>C3MQ85</accession>
<name>RL34_SACI2</name>
<evidence type="ECO:0000255" key="1">
    <source>
        <dbReference type="HAMAP-Rule" id="MF_00349"/>
    </source>
</evidence>
<evidence type="ECO:0000305" key="2"/>
<dbReference type="EMBL" id="CP001399">
    <property type="protein sequence ID" value="ACP35548.1"/>
    <property type="molecule type" value="Genomic_DNA"/>
</dbReference>
<dbReference type="RefSeq" id="WP_012713741.1">
    <property type="nucleotide sequence ID" value="NC_012589.1"/>
</dbReference>
<dbReference type="SMR" id="C3MQ85"/>
<dbReference type="GeneID" id="15297812"/>
<dbReference type="KEGG" id="sis:LS215_1541"/>
<dbReference type="HOGENOM" id="CLU_118652_2_0_2"/>
<dbReference type="OrthoDB" id="43096at2157"/>
<dbReference type="Proteomes" id="UP000001747">
    <property type="component" value="Chromosome"/>
</dbReference>
<dbReference type="GO" id="GO:1990904">
    <property type="term" value="C:ribonucleoprotein complex"/>
    <property type="evidence" value="ECO:0007669"/>
    <property type="project" value="UniProtKB-KW"/>
</dbReference>
<dbReference type="GO" id="GO:0005840">
    <property type="term" value="C:ribosome"/>
    <property type="evidence" value="ECO:0007669"/>
    <property type="project" value="UniProtKB-KW"/>
</dbReference>
<dbReference type="GO" id="GO:0003735">
    <property type="term" value="F:structural constituent of ribosome"/>
    <property type="evidence" value="ECO:0007669"/>
    <property type="project" value="InterPro"/>
</dbReference>
<dbReference type="GO" id="GO:0006412">
    <property type="term" value="P:translation"/>
    <property type="evidence" value="ECO:0007669"/>
    <property type="project" value="UniProtKB-UniRule"/>
</dbReference>
<dbReference type="Gene3D" id="6.20.340.10">
    <property type="match status" value="1"/>
</dbReference>
<dbReference type="HAMAP" id="MF_00349">
    <property type="entry name" value="Ribosomal_eL34"/>
    <property type="match status" value="1"/>
</dbReference>
<dbReference type="InterPro" id="IPR008195">
    <property type="entry name" value="Ribosomal_eL34"/>
</dbReference>
<dbReference type="InterPro" id="IPR038562">
    <property type="entry name" value="Ribosomal_eL34_C_sf"/>
</dbReference>
<dbReference type="InterPro" id="IPR018065">
    <property type="entry name" value="Ribosomal_eL34_CS"/>
</dbReference>
<dbReference type="InterPro" id="IPR047868">
    <property type="entry name" value="Ribosomal_L34e_arc-type"/>
</dbReference>
<dbReference type="NCBIfam" id="NF003143">
    <property type="entry name" value="PRK04059.1"/>
    <property type="match status" value="1"/>
</dbReference>
<dbReference type="Pfam" id="PF01199">
    <property type="entry name" value="Ribosomal_L34e"/>
    <property type="match status" value="1"/>
</dbReference>
<dbReference type="PRINTS" id="PR01250">
    <property type="entry name" value="RIBOSOMALL34"/>
</dbReference>
<dbReference type="PROSITE" id="PS01145">
    <property type="entry name" value="RIBOSOMAL_L34E"/>
    <property type="match status" value="1"/>
</dbReference>
<sequence length="85" mass="9804">MPRPALRSRSLRRIYVKLPSGKTAIHYERKKNDISKCAMCKKPLHGVKTNFLHKYGKSEKRPERPFGGYLCSSCLAQLIKAMVRQ</sequence>
<protein>
    <recommendedName>
        <fullName evidence="1">Large ribosomal subunit protein eL34</fullName>
    </recommendedName>
    <alternativeName>
        <fullName evidence="2">50S ribosomal protein L34e</fullName>
    </alternativeName>
</protein>
<organism>
    <name type="scientific">Saccharolobus islandicus (strain L.S.2.15 / Lassen #1)</name>
    <name type="common">Sulfolobus islandicus</name>
    <dbReference type="NCBI Taxonomy" id="429572"/>
    <lineage>
        <taxon>Archaea</taxon>
        <taxon>Thermoproteota</taxon>
        <taxon>Thermoprotei</taxon>
        <taxon>Sulfolobales</taxon>
        <taxon>Sulfolobaceae</taxon>
        <taxon>Saccharolobus</taxon>
    </lineage>
</organism>
<comment type="similarity">
    <text evidence="1">Belongs to the eukaryotic ribosomal protein eL34 family.</text>
</comment>
<proteinExistence type="inferred from homology"/>
<feature type="chain" id="PRO_1000205333" description="Large ribosomal subunit protein eL34">
    <location>
        <begin position="1"/>
        <end position="85"/>
    </location>
</feature>
<gene>
    <name evidence="1" type="primary">rpl34e</name>
    <name type="ordered locus">LS215_1541</name>
</gene>
<keyword id="KW-0687">Ribonucleoprotein</keyword>
<keyword id="KW-0689">Ribosomal protein</keyword>